<accession>A9IQ39</accession>
<evidence type="ECO:0000255" key="1">
    <source>
        <dbReference type="HAMAP-Rule" id="MF_00235"/>
    </source>
</evidence>
<feature type="chain" id="PRO_1000100532" description="Adenylate kinase">
    <location>
        <begin position="1"/>
        <end position="218"/>
    </location>
</feature>
<feature type="region of interest" description="NMP" evidence="1">
    <location>
        <begin position="30"/>
        <end position="59"/>
    </location>
</feature>
<feature type="region of interest" description="LID" evidence="1">
    <location>
        <begin position="122"/>
        <end position="159"/>
    </location>
</feature>
<feature type="binding site" evidence="1">
    <location>
        <begin position="10"/>
        <end position="15"/>
    </location>
    <ligand>
        <name>ATP</name>
        <dbReference type="ChEBI" id="CHEBI:30616"/>
    </ligand>
</feature>
<feature type="binding site" evidence="1">
    <location>
        <position position="31"/>
    </location>
    <ligand>
        <name>AMP</name>
        <dbReference type="ChEBI" id="CHEBI:456215"/>
    </ligand>
</feature>
<feature type="binding site" evidence="1">
    <location>
        <position position="36"/>
    </location>
    <ligand>
        <name>AMP</name>
        <dbReference type="ChEBI" id="CHEBI:456215"/>
    </ligand>
</feature>
<feature type="binding site" evidence="1">
    <location>
        <begin position="57"/>
        <end position="59"/>
    </location>
    <ligand>
        <name>AMP</name>
        <dbReference type="ChEBI" id="CHEBI:456215"/>
    </ligand>
</feature>
<feature type="binding site" evidence="1">
    <location>
        <begin position="85"/>
        <end position="88"/>
    </location>
    <ligand>
        <name>AMP</name>
        <dbReference type="ChEBI" id="CHEBI:456215"/>
    </ligand>
</feature>
<feature type="binding site" evidence="1">
    <location>
        <position position="92"/>
    </location>
    <ligand>
        <name>AMP</name>
        <dbReference type="ChEBI" id="CHEBI:456215"/>
    </ligand>
</feature>
<feature type="binding site" evidence="1">
    <location>
        <position position="123"/>
    </location>
    <ligand>
        <name>ATP</name>
        <dbReference type="ChEBI" id="CHEBI:30616"/>
    </ligand>
</feature>
<feature type="binding site" evidence="1">
    <location>
        <begin position="132"/>
        <end position="133"/>
    </location>
    <ligand>
        <name>ATP</name>
        <dbReference type="ChEBI" id="CHEBI:30616"/>
    </ligand>
</feature>
<feature type="binding site" evidence="1">
    <location>
        <position position="156"/>
    </location>
    <ligand>
        <name>AMP</name>
        <dbReference type="ChEBI" id="CHEBI:456215"/>
    </ligand>
</feature>
<feature type="binding site" evidence="1">
    <location>
        <position position="167"/>
    </location>
    <ligand>
        <name>AMP</name>
        <dbReference type="ChEBI" id="CHEBI:456215"/>
    </ligand>
</feature>
<feature type="binding site" evidence="1">
    <location>
        <position position="203"/>
    </location>
    <ligand>
        <name>ATP</name>
        <dbReference type="ChEBI" id="CHEBI:30616"/>
    </ligand>
</feature>
<keyword id="KW-0067">ATP-binding</keyword>
<keyword id="KW-0963">Cytoplasm</keyword>
<keyword id="KW-0418">Kinase</keyword>
<keyword id="KW-0545">Nucleotide biosynthesis</keyword>
<keyword id="KW-0547">Nucleotide-binding</keyword>
<keyword id="KW-0808">Transferase</keyword>
<gene>
    <name evidence="1" type="primary">adk</name>
    <name type="ordered locus">Bpet2673</name>
</gene>
<organism>
    <name type="scientific">Bordetella petrii (strain ATCC BAA-461 / DSM 12804 / CCUG 43448)</name>
    <dbReference type="NCBI Taxonomy" id="340100"/>
    <lineage>
        <taxon>Bacteria</taxon>
        <taxon>Pseudomonadati</taxon>
        <taxon>Pseudomonadota</taxon>
        <taxon>Betaproteobacteria</taxon>
        <taxon>Burkholderiales</taxon>
        <taxon>Alcaligenaceae</taxon>
        <taxon>Bordetella</taxon>
    </lineage>
</organism>
<dbReference type="EC" id="2.7.4.3" evidence="1"/>
<dbReference type="EMBL" id="AM902716">
    <property type="protein sequence ID" value="CAP43015.1"/>
    <property type="molecule type" value="Genomic_DNA"/>
</dbReference>
<dbReference type="SMR" id="A9IQ39"/>
<dbReference type="STRING" id="94624.Bpet2673"/>
<dbReference type="KEGG" id="bpt:Bpet2673"/>
<dbReference type="eggNOG" id="COG0563">
    <property type="taxonomic scope" value="Bacteria"/>
</dbReference>
<dbReference type="UniPathway" id="UPA00588">
    <property type="reaction ID" value="UER00649"/>
</dbReference>
<dbReference type="Proteomes" id="UP000001225">
    <property type="component" value="Chromosome"/>
</dbReference>
<dbReference type="GO" id="GO:0005737">
    <property type="term" value="C:cytoplasm"/>
    <property type="evidence" value="ECO:0007669"/>
    <property type="project" value="UniProtKB-SubCell"/>
</dbReference>
<dbReference type="GO" id="GO:0004017">
    <property type="term" value="F:adenylate kinase activity"/>
    <property type="evidence" value="ECO:0007669"/>
    <property type="project" value="UniProtKB-UniRule"/>
</dbReference>
<dbReference type="GO" id="GO:0005524">
    <property type="term" value="F:ATP binding"/>
    <property type="evidence" value="ECO:0007669"/>
    <property type="project" value="UniProtKB-UniRule"/>
</dbReference>
<dbReference type="GO" id="GO:0044209">
    <property type="term" value="P:AMP salvage"/>
    <property type="evidence" value="ECO:0007669"/>
    <property type="project" value="UniProtKB-UniRule"/>
</dbReference>
<dbReference type="CDD" id="cd01428">
    <property type="entry name" value="ADK"/>
    <property type="match status" value="1"/>
</dbReference>
<dbReference type="FunFam" id="3.40.50.300:FF:000106">
    <property type="entry name" value="Adenylate kinase mitochondrial"/>
    <property type="match status" value="1"/>
</dbReference>
<dbReference type="Gene3D" id="3.40.50.300">
    <property type="entry name" value="P-loop containing nucleotide triphosphate hydrolases"/>
    <property type="match status" value="1"/>
</dbReference>
<dbReference type="HAMAP" id="MF_00235">
    <property type="entry name" value="Adenylate_kinase_Adk"/>
    <property type="match status" value="1"/>
</dbReference>
<dbReference type="InterPro" id="IPR006259">
    <property type="entry name" value="Adenyl_kin_sub"/>
</dbReference>
<dbReference type="InterPro" id="IPR000850">
    <property type="entry name" value="Adenylat/UMP-CMP_kin"/>
</dbReference>
<dbReference type="InterPro" id="IPR033690">
    <property type="entry name" value="Adenylat_kinase_CS"/>
</dbReference>
<dbReference type="InterPro" id="IPR007862">
    <property type="entry name" value="Adenylate_kinase_lid-dom"/>
</dbReference>
<dbReference type="InterPro" id="IPR027417">
    <property type="entry name" value="P-loop_NTPase"/>
</dbReference>
<dbReference type="NCBIfam" id="TIGR01351">
    <property type="entry name" value="adk"/>
    <property type="match status" value="1"/>
</dbReference>
<dbReference type="NCBIfam" id="NF001379">
    <property type="entry name" value="PRK00279.1-1"/>
    <property type="match status" value="1"/>
</dbReference>
<dbReference type="NCBIfam" id="NF001380">
    <property type="entry name" value="PRK00279.1-2"/>
    <property type="match status" value="1"/>
</dbReference>
<dbReference type="NCBIfam" id="NF001381">
    <property type="entry name" value="PRK00279.1-3"/>
    <property type="match status" value="1"/>
</dbReference>
<dbReference type="NCBIfam" id="NF011100">
    <property type="entry name" value="PRK14527.1"/>
    <property type="match status" value="1"/>
</dbReference>
<dbReference type="PANTHER" id="PTHR23359">
    <property type="entry name" value="NUCLEOTIDE KINASE"/>
    <property type="match status" value="1"/>
</dbReference>
<dbReference type="Pfam" id="PF00406">
    <property type="entry name" value="ADK"/>
    <property type="match status" value="1"/>
</dbReference>
<dbReference type="Pfam" id="PF05191">
    <property type="entry name" value="ADK_lid"/>
    <property type="match status" value="1"/>
</dbReference>
<dbReference type="PRINTS" id="PR00094">
    <property type="entry name" value="ADENYLTKNASE"/>
</dbReference>
<dbReference type="SUPFAM" id="SSF52540">
    <property type="entry name" value="P-loop containing nucleoside triphosphate hydrolases"/>
    <property type="match status" value="1"/>
</dbReference>
<dbReference type="PROSITE" id="PS00113">
    <property type="entry name" value="ADENYLATE_KINASE"/>
    <property type="match status" value="1"/>
</dbReference>
<name>KAD_BORPD</name>
<reference key="1">
    <citation type="journal article" date="2008" name="BMC Genomics">
        <title>The missing link: Bordetella petrii is endowed with both the metabolic versatility of environmental bacteria and virulence traits of pathogenic Bordetellae.</title>
        <authorList>
            <person name="Gross R."/>
            <person name="Guzman C.A."/>
            <person name="Sebaihia M."/>
            <person name="Martin dos Santos V.A.P."/>
            <person name="Pieper D.H."/>
            <person name="Koebnik R."/>
            <person name="Lechner M."/>
            <person name="Bartels D."/>
            <person name="Buhrmester J."/>
            <person name="Choudhuri J.V."/>
            <person name="Ebensen T."/>
            <person name="Gaigalat L."/>
            <person name="Herrmann S."/>
            <person name="Khachane A.N."/>
            <person name="Larisch C."/>
            <person name="Link S."/>
            <person name="Linke B."/>
            <person name="Meyer F."/>
            <person name="Mormann S."/>
            <person name="Nakunst D."/>
            <person name="Rueckert C."/>
            <person name="Schneiker-Bekel S."/>
            <person name="Schulze K."/>
            <person name="Voerholter F.-J."/>
            <person name="Yevsa T."/>
            <person name="Engle J.T."/>
            <person name="Goldman W.E."/>
            <person name="Puehler A."/>
            <person name="Goebel U.B."/>
            <person name="Goesmann A."/>
            <person name="Bloecker H."/>
            <person name="Kaiser O."/>
            <person name="Martinez-Arias R."/>
        </authorList>
    </citation>
    <scope>NUCLEOTIDE SEQUENCE [LARGE SCALE GENOMIC DNA]</scope>
    <source>
        <strain>ATCC BAA-461 / DSM 12804 / CCUG 43448</strain>
    </source>
</reference>
<sequence length="218" mass="23757">MRLILLGPPGAGKGTQAAFVTQHFAIPQISTGDMLRAAVKQGTPLGQEAKKVMDAGGLVSDEIIIGLVQDRLKQPDCANGYLFDGFPRTIPQADALKSAGVALDYVVEIEVPEDDIIERMSGRRVHPASGRSYHVRFNPPKQEGLDDVTGEPLVQRDDDREDTVRNRLAVYQKQTRPLVDYYASWAQAGDGKAPKYRKISGVGAVDDIKARLFQALAS</sequence>
<proteinExistence type="inferred from homology"/>
<comment type="function">
    <text evidence="1">Catalyzes the reversible transfer of the terminal phosphate group between ATP and AMP. Plays an important role in cellular energy homeostasis and in adenine nucleotide metabolism.</text>
</comment>
<comment type="catalytic activity">
    <reaction evidence="1">
        <text>AMP + ATP = 2 ADP</text>
        <dbReference type="Rhea" id="RHEA:12973"/>
        <dbReference type="ChEBI" id="CHEBI:30616"/>
        <dbReference type="ChEBI" id="CHEBI:456215"/>
        <dbReference type="ChEBI" id="CHEBI:456216"/>
        <dbReference type="EC" id="2.7.4.3"/>
    </reaction>
</comment>
<comment type="pathway">
    <text evidence="1">Purine metabolism; AMP biosynthesis via salvage pathway; AMP from ADP: step 1/1.</text>
</comment>
<comment type="subunit">
    <text evidence="1">Monomer.</text>
</comment>
<comment type="subcellular location">
    <subcellularLocation>
        <location evidence="1">Cytoplasm</location>
    </subcellularLocation>
</comment>
<comment type="domain">
    <text evidence="1">Consists of three domains, a large central CORE domain and two small peripheral domains, NMPbind and LID, which undergo movements during catalysis. The LID domain closes over the site of phosphoryl transfer upon ATP binding. Assembling and dissambling the active center during each catalytic cycle provides an effective means to prevent ATP hydrolysis.</text>
</comment>
<comment type="similarity">
    <text evidence="1">Belongs to the adenylate kinase family.</text>
</comment>
<protein>
    <recommendedName>
        <fullName evidence="1">Adenylate kinase</fullName>
        <shortName evidence="1">AK</shortName>
        <ecNumber evidence="1">2.7.4.3</ecNumber>
    </recommendedName>
    <alternativeName>
        <fullName evidence="1">ATP-AMP transphosphorylase</fullName>
    </alternativeName>
    <alternativeName>
        <fullName evidence="1">ATP:AMP phosphotransferase</fullName>
    </alternativeName>
    <alternativeName>
        <fullName evidence="1">Adenylate monophosphate kinase</fullName>
    </alternativeName>
</protein>